<dbReference type="EMBL" id="AE006468">
    <property type="protein sequence ID" value="AAL20721.1"/>
    <property type="molecule type" value="Genomic_DNA"/>
</dbReference>
<dbReference type="RefSeq" id="NP_460762.1">
    <property type="nucleotide sequence ID" value="NC_003197.2"/>
</dbReference>
<dbReference type="RefSeq" id="WP_000406435.1">
    <property type="nucleotide sequence ID" value="NC_003197.2"/>
</dbReference>
<dbReference type="SMR" id="Q8ZP14"/>
<dbReference type="STRING" id="99287.STM1806"/>
<dbReference type="PaxDb" id="99287-STM1806"/>
<dbReference type="GeneID" id="1253325"/>
<dbReference type="KEGG" id="stm:STM1806"/>
<dbReference type="PATRIC" id="fig|99287.12.peg.1905"/>
<dbReference type="HOGENOM" id="CLU_041110_0_0_6"/>
<dbReference type="OMA" id="FFIRMAP"/>
<dbReference type="PhylomeDB" id="Q8ZP14"/>
<dbReference type="BioCyc" id="SENT99287:STM1806-MONOMER"/>
<dbReference type="Proteomes" id="UP000001014">
    <property type="component" value="Chromosome"/>
</dbReference>
<dbReference type="GO" id="GO:0005886">
    <property type="term" value="C:plasma membrane"/>
    <property type="evidence" value="ECO:0000318"/>
    <property type="project" value="GO_Central"/>
</dbReference>
<dbReference type="GO" id="GO:0015385">
    <property type="term" value="F:sodium:proton antiporter activity"/>
    <property type="evidence" value="ECO:0000318"/>
    <property type="project" value="GO_Central"/>
</dbReference>
<dbReference type="HAMAP" id="MF_01599">
    <property type="entry name" value="NhaB"/>
    <property type="match status" value="1"/>
</dbReference>
<dbReference type="InterPro" id="IPR004671">
    <property type="entry name" value="Na+/H+_antiporter_NhaB"/>
</dbReference>
<dbReference type="NCBIfam" id="TIGR00774">
    <property type="entry name" value="NhaB"/>
    <property type="match status" value="1"/>
</dbReference>
<dbReference type="NCBIfam" id="NF007093">
    <property type="entry name" value="PRK09547.1"/>
    <property type="match status" value="1"/>
</dbReference>
<dbReference type="PANTHER" id="PTHR43302:SF1">
    <property type="entry name" value="NA(+)_H(+) ANTIPORTER NHAB"/>
    <property type="match status" value="1"/>
</dbReference>
<dbReference type="PANTHER" id="PTHR43302">
    <property type="entry name" value="TRANSPORTER ARSB-RELATED"/>
    <property type="match status" value="1"/>
</dbReference>
<dbReference type="Pfam" id="PF06450">
    <property type="entry name" value="NhaB"/>
    <property type="match status" value="1"/>
</dbReference>
<protein>
    <recommendedName>
        <fullName evidence="1">Na(+)/H(+) antiporter NhaB</fullName>
    </recommendedName>
    <alternativeName>
        <fullName evidence="1">Sodium/proton antiporter NhaB</fullName>
    </alternativeName>
</protein>
<name>NHAB_SALTY</name>
<accession>Q8ZP14</accession>
<organism>
    <name type="scientific">Salmonella typhimurium (strain LT2 / SGSC1412 / ATCC 700720)</name>
    <dbReference type="NCBI Taxonomy" id="99287"/>
    <lineage>
        <taxon>Bacteria</taxon>
        <taxon>Pseudomonadati</taxon>
        <taxon>Pseudomonadota</taxon>
        <taxon>Gammaproteobacteria</taxon>
        <taxon>Enterobacterales</taxon>
        <taxon>Enterobacteriaceae</taxon>
        <taxon>Salmonella</taxon>
    </lineage>
</organism>
<evidence type="ECO:0000255" key="1">
    <source>
        <dbReference type="HAMAP-Rule" id="MF_01599"/>
    </source>
</evidence>
<gene>
    <name evidence="1" type="primary">nhaB</name>
    <name type="ordered locus">STM1806</name>
</gene>
<proteinExistence type="inferred from homology"/>
<keyword id="KW-0050">Antiport</keyword>
<keyword id="KW-0997">Cell inner membrane</keyword>
<keyword id="KW-1003">Cell membrane</keyword>
<keyword id="KW-0406">Ion transport</keyword>
<keyword id="KW-0472">Membrane</keyword>
<keyword id="KW-1185">Reference proteome</keyword>
<keyword id="KW-0915">Sodium</keyword>
<keyword id="KW-0739">Sodium transport</keyword>
<keyword id="KW-0812">Transmembrane</keyword>
<keyword id="KW-1133">Transmembrane helix</keyword>
<keyword id="KW-0813">Transport</keyword>
<comment type="function">
    <text evidence="1">Na(+)/H(+) antiporter that extrudes sodium in exchange for external protons.</text>
</comment>
<comment type="catalytic activity">
    <reaction evidence="1">
        <text>2 Na(+)(in) + 3 H(+)(out) = 2 Na(+)(out) + 3 H(+)(in)</text>
        <dbReference type="Rhea" id="RHEA:29247"/>
        <dbReference type="ChEBI" id="CHEBI:15378"/>
        <dbReference type="ChEBI" id="CHEBI:29101"/>
    </reaction>
    <physiologicalReaction direction="left-to-right" evidence="1">
        <dbReference type="Rhea" id="RHEA:29248"/>
    </physiologicalReaction>
</comment>
<comment type="subcellular location">
    <subcellularLocation>
        <location evidence="1">Cell inner membrane</location>
        <topology evidence="1">Multi-pass membrane protein</topology>
    </subcellularLocation>
</comment>
<comment type="similarity">
    <text evidence="1">Belongs to the NhaB Na(+)/H(+) (TC 2.A.34) antiporter family.</text>
</comment>
<sequence>MEISWGRAMWRNFLGQSPDWYKLALLVFLIVNPFIFLANPFIAGWLLVAEFIFTLAMALKCYPLLPGGLLAIEAVIIGMTSAAHVREEVAANLEVLLLLMFMVAGIYFMKQLLLFIFTRLLLSIRSKMVLSLAFCVAAAFLSAFLDALTVVAVVISVAVGFYGIYHRVASSRGEENDMLDDSHIDPHYKTVLEQFRGFLRSLMMHAGVGTALGGVMTMVGEPQNLIIAKAAGWHFGDFFLRMSPVTVPVLVCGLLTCMLVEKMRWFGYGETLPEKVRDVLQQFDDQSRKKRTRQDKIKLIVQAIIGVWLVTALALHLAEVGLIGLSVIILATALTGVTDEHAIGKAFTESLPFTALLTVFFSIVAVIIDQHLFAPIIQFVLQASEHAQLTLFYLFNGLLSSISDNVFVGTIYINEAKAAMENGAISLKQFELLAVAINTGTNLPSVATPNGQAAFLFLLTSALAPLIRLSYGRMVWMALPYTIVLTLIGLLCVEFTLAPATEWMTQAGWLATLS</sequence>
<reference key="1">
    <citation type="journal article" date="2001" name="Nature">
        <title>Complete genome sequence of Salmonella enterica serovar Typhimurium LT2.</title>
        <authorList>
            <person name="McClelland M."/>
            <person name="Sanderson K.E."/>
            <person name="Spieth J."/>
            <person name="Clifton S.W."/>
            <person name="Latreille P."/>
            <person name="Courtney L."/>
            <person name="Porwollik S."/>
            <person name="Ali J."/>
            <person name="Dante M."/>
            <person name="Du F."/>
            <person name="Hou S."/>
            <person name="Layman D."/>
            <person name="Leonard S."/>
            <person name="Nguyen C."/>
            <person name="Scott K."/>
            <person name="Holmes A."/>
            <person name="Grewal N."/>
            <person name="Mulvaney E."/>
            <person name="Ryan E."/>
            <person name="Sun H."/>
            <person name="Florea L."/>
            <person name="Miller W."/>
            <person name="Stoneking T."/>
            <person name="Nhan M."/>
            <person name="Waterston R."/>
            <person name="Wilson R.K."/>
        </authorList>
    </citation>
    <scope>NUCLEOTIDE SEQUENCE [LARGE SCALE GENOMIC DNA]</scope>
    <source>
        <strain>LT2 / SGSC1412 / ATCC 700720</strain>
    </source>
</reference>
<feature type="chain" id="PRO_0000333121" description="Na(+)/H(+) antiporter NhaB">
    <location>
        <begin position="1"/>
        <end position="514"/>
    </location>
</feature>
<feature type="transmembrane region" description="Helical" evidence="1">
    <location>
        <begin position="23"/>
        <end position="43"/>
    </location>
</feature>
<feature type="transmembrane region" description="Helical" evidence="1">
    <location>
        <begin position="63"/>
        <end position="83"/>
    </location>
</feature>
<feature type="transmembrane region" description="Helical" evidence="1">
    <location>
        <begin position="97"/>
        <end position="117"/>
    </location>
</feature>
<feature type="transmembrane region" description="Helical" evidence="1">
    <location>
        <begin position="120"/>
        <end position="140"/>
    </location>
</feature>
<feature type="transmembrane region" description="Helical" evidence="1">
    <location>
        <begin position="144"/>
        <end position="164"/>
    </location>
</feature>
<feature type="transmembrane region" description="Helical" evidence="1">
    <location>
        <begin position="202"/>
        <end position="222"/>
    </location>
</feature>
<feature type="transmembrane region" description="Helical" evidence="1">
    <location>
        <begin position="238"/>
        <end position="258"/>
    </location>
</feature>
<feature type="transmembrane region" description="Helical" evidence="1">
    <location>
        <begin position="303"/>
        <end position="323"/>
    </location>
</feature>
<feature type="transmembrane region" description="Helical" evidence="1">
    <location>
        <begin position="357"/>
        <end position="377"/>
    </location>
</feature>
<feature type="transmembrane region" description="Helical" evidence="1">
    <location>
        <begin position="391"/>
        <end position="411"/>
    </location>
</feature>
<feature type="transmembrane region" description="Helical" evidence="1">
    <location>
        <begin position="447"/>
        <end position="467"/>
    </location>
</feature>
<feature type="transmembrane region" description="Helical" evidence="1">
    <location>
        <begin position="475"/>
        <end position="495"/>
    </location>
</feature>